<reference key="1">
    <citation type="journal article" date="1998" name="Genetics">
        <title>The complete nucleotide sequence of a snake (Dinodon semicarinatus) mitochondrial genome with two identical control regions.</title>
        <authorList>
            <person name="Kumazawa Y."/>
            <person name="Ota H."/>
            <person name="Nishida M."/>
            <person name="Ozawa T."/>
        </authorList>
    </citation>
    <scope>NUCLEOTIDE SEQUENCE [GENOMIC DNA]</scope>
    <source>
        <tissue>Liver</tissue>
    </source>
</reference>
<evidence type="ECO:0000250" key="1"/>
<evidence type="ECO:0000255" key="2"/>
<evidence type="ECO:0000305" key="3"/>
<gene>
    <name type="primary">MT-ND6</name>
    <name type="synonym">MTND6</name>
    <name type="synonym">NADH6</name>
    <name type="synonym">ND6</name>
</gene>
<sequence length="166" mass="18108">MNYFFSLVLVFLVLSVVVLGVVSAPYQGVVALMGVSFFCCIFMVFLGRTFAALVMYIVYLGGLVVVFGYCVSVEKESGIYSVGGTKYFIVCVSLLLVVLLCLLREVGGLLVYVNWGDLVCLEMNGVGVFYFSGGWGLIVCSWGLLVVLFSILVILSWSRLGGLRPF</sequence>
<name>NU6M_LYCSM</name>
<feature type="chain" id="PRO_0000118277" description="NADH-ubiquinone oxidoreductase chain 6">
    <location>
        <begin position="1"/>
        <end position="166"/>
    </location>
</feature>
<feature type="transmembrane region" description="Helical" evidence="2">
    <location>
        <begin position="4"/>
        <end position="24"/>
    </location>
</feature>
<feature type="transmembrane region" description="Helical" evidence="2">
    <location>
        <begin position="27"/>
        <end position="47"/>
    </location>
</feature>
<feature type="transmembrane region" description="Helical" evidence="2">
    <location>
        <begin position="50"/>
        <end position="70"/>
    </location>
</feature>
<feature type="transmembrane region" description="Helical" evidence="2">
    <location>
        <begin position="82"/>
        <end position="102"/>
    </location>
</feature>
<feature type="transmembrane region" description="Helical" evidence="2">
    <location>
        <begin position="109"/>
        <end position="129"/>
    </location>
</feature>
<feature type="transmembrane region" description="Helical" evidence="2">
    <location>
        <begin position="135"/>
        <end position="155"/>
    </location>
</feature>
<dbReference type="EC" id="7.1.1.2"/>
<dbReference type="EMBL" id="AB008539">
    <property type="protein sequence ID" value="BAA33033.1"/>
    <property type="molecule type" value="Genomic_DNA"/>
</dbReference>
<dbReference type="PIR" id="T11099">
    <property type="entry name" value="T11099"/>
</dbReference>
<dbReference type="RefSeq" id="NP_008430.1">
    <property type="nucleotide sequence ID" value="NC_001945.1"/>
</dbReference>
<dbReference type="GeneID" id="808274"/>
<dbReference type="CTD" id="4541"/>
<dbReference type="GO" id="GO:0031966">
    <property type="term" value="C:mitochondrial membrane"/>
    <property type="evidence" value="ECO:0007669"/>
    <property type="project" value="UniProtKB-SubCell"/>
</dbReference>
<dbReference type="GO" id="GO:0008137">
    <property type="term" value="F:NADH dehydrogenase (ubiquinone) activity"/>
    <property type="evidence" value="ECO:0007669"/>
    <property type="project" value="UniProtKB-EC"/>
</dbReference>
<dbReference type="InterPro" id="IPR050269">
    <property type="entry name" value="ComplexI_Subunit6"/>
</dbReference>
<dbReference type="PANTHER" id="PTHR11435">
    <property type="entry name" value="NADH UBIQUINONE OXIDOREDUCTASE SUBUNIT ND6"/>
    <property type="match status" value="1"/>
</dbReference>
<dbReference type="PANTHER" id="PTHR11435:SF1">
    <property type="entry name" value="NADH-UBIQUINONE OXIDOREDUCTASE CHAIN 6"/>
    <property type="match status" value="1"/>
</dbReference>
<keyword id="KW-0249">Electron transport</keyword>
<keyword id="KW-0472">Membrane</keyword>
<keyword id="KW-0496">Mitochondrion</keyword>
<keyword id="KW-0520">NAD</keyword>
<keyword id="KW-0679">Respiratory chain</keyword>
<keyword id="KW-1278">Translocase</keyword>
<keyword id="KW-0812">Transmembrane</keyword>
<keyword id="KW-1133">Transmembrane helix</keyword>
<keyword id="KW-0813">Transport</keyword>
<keyword id="KW-0830">Ubiquinone</keyword>
<geneLocation type="mitochondrion"/>
<proteinExistence type="inferred from homology"/>
<accession>O79557</accession>
<comment type="function">
    <text evidence="1">Core subunit of the mitochondrial membrane respiratory chain NADH dehydrogenase (Complex I) that is believed to belong to the minimal assembly required for catalysis. Complex I functions in the transfer of electrons from NADH to the respiratory chain. The immediate electron acceptor for the enzyme is believed to be ubiquinone (By similarity).</text>
</comment>
<comment type="catalytic activity">
    <reaction>
        <text>a ubiquinone + NADH + 5 H(+)(in) = a ubiquinol + NAD(+) + 4 H(+)(out)</text>
        <dbReference type="Rhea" id="RHEA:29091"/>
        <dbReference type="Rhea" id="RHEA-COMP:9565"/>
        <dbReference type="Rhea" id="RHEA-COMP:9566"/>
        <dbReference type="ChEBI" id="CHEBI:15378"/>
        <dbReference type="ChEBI" id="CHEBI:16389"/>
        <dbReference type="ChEBI" id="CHEBI:17976"/>
        <dbReference type="ChEBI" id="CHEBI:57540"/>
        <dbReference type="ChEBI" id="CHEBI:57945"/>
        <dbReference type="EC" id="7.1.1.2"/>
    </reaction>
</comment>
<comment type="subcellular location">
    <subcellularLocation>
        <location evidence="3">Mitochondrion membrane</location>
        <topology evidence="3">Multi-pass membrane protein</topology>
    </subcellularLocation>
</comment>
<comment type="similarity">
    <text evidence="3">Belongs to the complex I subunit 6 family.</text>
</comment>
<organism>
    <name type="scientific">Lycodon semicarinatus</name>
    <name type="common">Ryukyu odd-tooth snake</name>
    <name type="synonym">Eumesodon semicarinatus</name>
    <dbReference type="NCBI Taxonomy" id="56549"/>
    <lineage>
        <taxon>Eukaryota</taxon>
        <taxon>Metazoa</taxon>
        <taxon>Chordata</taxon>
        <taxon>Craniata</taxon>
        <taxon>Vertebrata</taxon>
        <taxon>Euteleostomi</taxon>
        <taxon>Lepidosauria</taxon>
        <taxon>Squamata</taxon>
        <taxon>Bifurcata</taxon>
        <taxon>Unidentata</taxon>
        <taxon>Episquamata</taxon>
        <taxon>Toxicofera</taxon>
        <taxon>Serpentes</taxon>
        <taxon>Colubroidea</taxon>
        <taxon>Colubridae</taxon>
        <taxon>Colubrinae</taxon>
        <taxon>Lycodon</taxon>
    </lineage>
</organism>
<protein>
    <recommendedName>
        <fullName>NADH-ubiquinone oxidoreductase chain 6</fullName>
        <ecNumber>7.1.1.2</ecNumber>
    </recommendedName>
    <alternativeName>
        <fullName>NADH dehydrogenase subunit 6</fullName>
    </alternativeName>
</protein>